<dbReference type="EC" id="3.2.1.8"/>
<dbReference type="EMBL" id="AY144349">
    <property type="protein sequence ID" value="AAB06573.2"/>
    <property type="molecule type" value="Genomic_DNA"/>
</dbReference>
<dbReference type="SMR" id="Q92245"/>
<dbReference type="GlyCosmos" id="Q92245">
    <property type="glycosylation" value="1 site, No reported glycans"/>
</dbReference>
<dbReference type="OMA" id="THFDAWA"/>
<dbReference type="UniPathway" id="UPA00114"/>
<dbReference type="Proteomes" id="UP000515153">
    <property type="component" value="Unplaced"/>
</dbReference>
<dbReference type="GO" id="GO:0005576">
    <property type="term" value="C:extracellular region"/>
    <property type="evidence" value="ECO:0007669"/>
    <property type="project" value="UniProtKB-SubCell"/>
</dbReference>
<dbReference type="GO" id="GO:0031176">
    <property type="term" value="F:endo-1,4-beta-xylanase activity"/>
    <property type="evidence" value="ECO:0007669"/>
    <property type="project" value="UniProtKB-EC"/>
</dbReference>
<dbReference type="GO" id="GO:0045493">
    <property type="term" value="P:xylan catabolic process"/>
    <property type="evidence" value="ECO:0007669"/>
    <property type="project" value="UniProtKB-UniPathway"/>
</dbReference>
<dbReference type="FunFam" id="2.60.120.180:FF:000001">
    <property type="entry name" value="Endo-1,4-beta-xylanase"/>
    <property type="match status" value="1"/>
</dbReference>
<dbReference type="Gene3D" id="2.60.120.180">
    <property type="match status" value="1"/>
</dbReference>
<dbReference type="InterPro" id="IPR013320">
    <property type="entry name" value="ConA-like_dom_sf"/>
</dbReference>
<dbReference type="InterPro" id="IPR013319">
    <property type="entry name" value="GH11/12"/>
</dbReference>
<dbReference type="InterPro" id="IPR018208">
    <property type="entry name" value="GH11_AS_1"/>
</dbReference>
<dbReference type="InterPro" id="IPR033119">
    <property type="entry name" value="GH11_AS_2"/>
</dbReference>
<dbReference type="InterPro" id="IPR033123">
    <property type="entry name" value="GH11_dom"/>
</dbReference>
<dbReference type="InterPro" id="IPR001137">
    <property type="entry name" value="Glyco_hydro_11"/>
</dbReference>
<dbReference type="PANTHER" id="PTHR46828:SF3">
    <property type="entry name" value="ENDO-1,4-BETA-XYLANASE"/>
    <property type="match status" value="1"/>
</dbReference>
<dbReference type="PANTHER" id="PTHR46828">
    <property type="entry name" value="ENDO-1,4-BETA-XYLANASE A-RELATED"/>
    <property type="match status" value="1"/>
</dbReference>
<dbReference type="Pfam" id="PF00457">
    <property type="entry name" value="Glyco_hydro_11"/>
    <property type="match status" value="1"/>
</dbReference>
<dbReference type="PRINTS" id="PR00911">
    <property type="entry name" value="GLHYDRLASE11"/>
</dbReference>
<dbReference type="SUPFAM" id="SSF49899">
    <property type="entry name" value="Concanavalin A-like lectins/glucanases"/>
    <property type="match status" value="1"/>
</dbReference>
<dbReference type="PROSITE" id="PS00776">
    <property type="entry name" value="GH11_1"/>
    <property type="match status" value="1"/>
</dbReference>
<dbReference type="PROSITE" id="PS00777">
    <property type="entry name" value="GH11_2"/>
    <property type="match status" value="1"/>
</dbReference>
<dbReference type="PROSITE" id="PS51761">
    <property type="entry name" value="GH11_3"/>
    <property type="match status" value="1"/>
</dbReference>
<evidence type="ECO:0000250" key="1"/>
<evidence type="ECO:0000255" key="2"/>
<evidence type="ECO:0000255" key="3">
    <source>
        <dbReference type="PROSITE-ProRule" id="PRU01097"/>
    </source>
</evidence>
<evidence type="ECO:0000255" key="4">
    <source>
        <dbReference type="PROSITE-ProRule" id="PRU10062"/>
    </source>
</evidence>
<evidence type="ECO:0000255" key="5">
    <source>
        <dbReference type="PROSITE-ProRule" id="PRU10063"/>
    </source>
</evidence>
<evidence type="ECO:0000305" key="6"/>
<organism>
    <name type="scientific">Pyricularia grisea</name>
    <name type="common">Crabgrass-specific blast fungus</name>
    <name type="synonym">Magnaporthe grisea</name>
    <dbReference type="NCBI Taxonomy" id="148305"/>
    <lineage>
        <taxon>Eukaryota</taxon>
        <taxon>Fungi</taxon>
        <taxon>Dikarya</taxon>
        <taxon>Ascomycota</taxon>
        <taxon>Pezizomycotina</taxon>
        <taxon>Sordariomycetes</taxon>
        <taxon>Sordariomycetidae</taxon>
        <taxon>Magnaporthales</taxon>
        <taxon>Pyriculariaceae</taxon>
        <taxon>Pyricularia</taxon>
    </lineage>
</organism>
<protein>
    <recommendedName>
        <fullName>Endo-1,4-beta-xylanase 4</fullName>
        <shortName>Xylanase 4</shortName>
        <ecNumber>3.2.1.8</ecNumber>
    </recommendedName>
    <alternativeName>
        <fullName>1,4-beta-D-xylan xylanohydrolase 4</fullName>
    </alternativeName>
</protein>
<keyword id="KW-0119">Carbohydrate metabolism</keyword>
<keyword id="KW-0325">Glycoprotein</keyword>
<keyword id="KW-0326">Glycosidase</keyword>
<keyword id="KW-0378">Hydrolase</keyword>
<keyword id="KW-0624">Polysaccharide degradation</keyword>
<keyword id="KW-1185">Reference proteome</keyword>
<keyword id="KW-0964">Secreted</keyword>
<keyword id="KW-0732">Signal</keyword>
<keyword id="KW-0858">Xylan degradation</keyword>
<proteinExistence type="inferred from homology"/>
<accession>Q92245</accession>
<sequence length="231" mass="25305">MVSFTTILVAATAALVAANPVPPSIDEMREIYVKSRDLHARGGTPSSTGTHDGFYYSWWTDNGAQATYTNNAGGSYSITWSGNGNLVGGKGWNPGSARNVTYSANYRPNGNSYLSVYGWTRNPLVEYYVVENFGTYDPSSQASRKGTINVDGATYQVAQSTRTNQPSIDGTRTFQQYWSVRQQKRSSGTVDMKKHFDAWASMGMKLGTHDYQIVATEGYFSSGSSTVTIQR</sequence>
<reference key="1">
    <citation type="submission" date="2002-08" db="EMBL/GenBank/DDBJ databases">
        <title>Three differentially expressed xylanases from the rice blast fungus are required for pathogenicity.</title>
        <authorList>
            <person name="Wu S.-C."/>
            <person name="Darvill A.G."/>
            <person name="Albersheim P."/>
        </authorList>
    </citation>
    <scope>NUCLEOTIDE SEQUENCE [GENOMIC DNA]</scope>
    <source>
        <strain>X7231</strain>
        <tissue>Mycelium</tissue>
    </source>
</reference>
<feature type="signal peptide" evidence="2">
    <location>
        <begin position="1"/>
        <end position="18"/>
    </location>
</feature>
<feature type="chain" id="PRO_0000429624" description="Endo-1,4-beta-xylanase 4">
    <location>
        <begin position="19"/>
        <end position="231"/>
    </location>
</feature>
<feature type="domain" description="GH11" evidence="3">
    <location>
        <begin position="42"/>
        <end position="230"/>
    </location>
</feature>
<feature type="active site" description="Nucleophile" evidence="4">
    <location>
        <position position="126"/>
    </location>
</feature>
<feature type="active site" description="Proton donor" evidence="5">
    <location>
        <position position="217"/>
    </location>
</feature>
<feature type="glycosylation site" description="N-linked (GlcNAc...) asparagine" evidence="2">
    <location>
        <position position="99"/>
    </location>
</feature>
<name>XYN4_PYRGI</name>
<gene>
    <name type="primary">XYL4</name>
</gene>
<comment type="function">
    <text>Endo-1,4-beta-xylanase involved in the hydrolysis of xylan, a major structural heterogeneous polysaccharide found in plant biomass representing the second most abundant polysaccharide in the biosphere, after cellulose.</text>
</comment>
<comment type="catalytic activity">
    <reaction>
        <text>Endohydrolysis of (1-&gt;4)-beta-D-xylosidic linkages in xylans.</text>
        <dbReference type="EC" id="3.2.1.8"/>
    </reaction>
</comment>
<comment type="pathway">
    <text>Glycan degradation; xylan degradation.</text>
</comment>
<comment type="subcellular location">
    <subcellularLocation>
        <location evidence="1">Secreted</location>
    </subcellularLocation>
</comment>
<comment type="similarity">
    <text evidence="6">Belongs to the glycosyl hydrolase 11 (cellulase G) family.</text>
</comment>